<sequence>MPQFFRTQPLTDRTTSHGFAEVSSEDHCYCVWLVPAISSDIELRYRTFVDWAVCHKVDFEEMQLPTAPHITLARGIKLKPNQSFKSVLQYIASKRKSPLNIKFGKVAIGDSFYKRVYIQVEKTPGLEELQNAAYDLADTSDPFNVIEHPYMPVIYAKSICSDYSTSDPIETISSIGQASWGKACFLELIQLNKANHQGYVCDRIEFTV</sequence>
<keyword id="KW-1185">Reference proteome</keyword>
<proteinExistence type="predicted"/>
<gene>
    <name type="ORF">SPAC2E11.15</name>
    <name type="ORF">SPACUNK4.15</name>
</gene>
<dbReference type="EMBL" id="CU329670">
    <property type="protein sequence ID" value="CAA20145.1"/>
    <property type="molecule type" value="Genomic_DNA"/>
</dbReference>
<dbReference type="PIR" id="T41710">
    <property type="entry name" value="T41710"/>
</dbReference>
<dbReference type="RefSeq" id="NP_593963.1">
    <property type="nucleotide sequence ID" value="NM_001019390.2"/>
</dbReference>
<dbReference type="SMR" id="O14080"/>
<dbReference type="BioGRID" id="279066">
    <property type="interactions" value="7"/>
</dbReference>
<dbReference type="STRING" id="284812.O14080"/>
<dbReference type="iPTMnet" id="O14080"/>
<dbReference type="PaxDb" id="4896-SPACUNK4.15.1"/>
<dbReference type="EnsemblFungi" id="SPACUNK4.15.1">
    <property type="protein sequence ID" value="SPACUNK4.15.1:pep"/>
    <property type="gene ID" value="SPACUNK4.15"/>
</dbReference>
<dbReference type="PomBase" id="SPACUNK4.15"/>
<dbReference type="VEuPathDB" id="FungiDB:SPACUNK4.15"/>
<dbReference type="HOGENOM" id="CLU_1321585_0_0_1"/>
<dbReference type="InParanoid" id="O14080"/>
<dbReference type="OMA" id="THQGIIC"/>
<dbReference type="PRO" id="PR:O14080"/>
<dbReference type="Proteomes" id="UP000002485">
    <property type="component" value="Chromosome I"/>
</dbReference>
<dbReference type="GO" id="GO:0030136">
    <property type="term" value="C:clathrin-coated vesicle"/>
    <property type="evidence" value="ECO:0000266"/>
    <property type="project" value="PomBase"/>
</dbReference>
<dbReference type="GO" id="GO:0005829">
    <property type="term" value="C:cytosol"/>
    <property type="evidence" value="ECO:0007005"/>
    <property type="project" value="PomBase"/>
</dbReference>
<dbReference type="GO" id="GO:0005634">
    <property type="term" value="C:nucleus"/>
    <property type="evidence" value="ECO:0007005"/>
    <property type="project" value="PomBase"/>
</dbReference>
<dbReference type="GO" id="GO:0004113">
    <property type="term" value="F:2',3'-cyclic-nucleotide 3'-phosphodiesterase activity"/>
    <property type="evidence" value="ECO:0000318"/>
    <property type="project" value="GO_Central"/>
</dbReference>
<dbReference type="GO" id="GO:0009187">
    <property type="term" value="P:cyclic nucleotide metabolic process"/>
    <property type="evidence" value="ECO:0000266"/>
    <property type="project" value="PomBase"/>
</dbReference>
<dbReference type="Gene3D" id="3.90.1140.10">
    <property type="entry name" value="Cyclic phosphodiesterase"/>
    <property type="match status" value="1"/>
</dbReference>
<dbReference type="InterPro" id="IPR012386">
    <property type="entry name" value="Cyclic-nucl_3Pdiesterase"/>
</dbReference>
<dbReference type="InterPro" id="IPR009097">
    <property type="entry name" value="Cyclic_Pdiesterase"/>
</dbReference>
<dbReference type="PANTHER" id="PTHR28141">
    <property type="entry name" value="2',3'-CYCLIC-NUCLEOTIDE 3'-PHOSPHODIESTERASE"/>
    <property type="match status" value="1"/>
</dbReference>
<dbReference type="PANTHER" id="PTHR28141:SF1">
    <property type="entry name" value="2',3'-CYCLIC-NUCLEOTIDE 3'-PHOSPHODIESTERASE"/>
    <property type="match status" value="1"/>
</dbReference>
<dbReference type="Pfam" id="PF07823">
    <property type="entry name" value="CPDase"/>
    <property type="match status" value="1"/>
</dbReference>
<dbReference type="SUPFAM" id="SSF55144">
    <property type="entry name" value="LigT-like"/>
    <property type="match status" value="1"/>
</dbReference>
<feature type="chain" id="PRO_0000116713" description="Uncharacterized protein UNK4,15">
    <location>
        <begin position="1"/>
        <end position="208"/>
    </location>
</feature>
<organism>
    <name type="scientific">Schizosaccharomyces pombe (strain 972 / ATCC 24843)</name>
    <name type="common">Fission yeast</name>
    <dbReference type="NCBI Taxonomy" id="284812"/>
    <lineage>
        <taxon>Eukaryota</taxon>
        <taxon>Fungi</taxon>
        <taxon>Dikarya</taxon>
        <taxon>Ascomycota</taxon>
        <taxon>Taphrinomycotina</taxon>
        <taxon>Schizosaccharomycetes</taxon>
        <taxon>Schizosaccharomycetales</taxon>
        <taxon>Schizosaccharomycetaceae</taxon>
        <taxon>Schizosaccharomyces</taxon>
    </lineage>
</organism>
<reference key="1">
    <citation type="journal article" date="2002" name="Nature">
        <title>The genome sequence of Schizosaccharomyces pombe.</title>
        <authorList>
            <person name="Wood V."/>
            <person name="Gwilliam R."/>
            <person name="Rajandream M.A."/>
            <person name="Lyne M.H."/>
            <person name="Lyne R."/>
            <person name="Stewart A."/>
            <person name="Sgouros J.G."/>
            <person name="Peat N."/>
            <person name="Hayles J."/>
            <person name="Baker S.G."/>
            <person name="Basham D."/>
            <person name="Bowman S."/>
            <person name="Brooks K."/>
            <person name="Brown D."/>
            <person name="Brown S."/>
            <person name="Chillingworth T."/>
            <person name="Churcher C.M."/>
            <person name="Collins M."/>
            <person name="Connor R."/>
            <person name="Cronin A."/>
            <person name="Davis P."/>
            <person name="Feltwell T."/>
            <person name="Fraser A."/>
            <person name="Gentles S."/>
            <person name="Goble A."/>
            <person name="Hamlin N."/>
            <person name="Harris D.E."/>
            <person name="Hidalgo J."/>
            <person name="Hodgson G."/>
            <person name="Holroyd S."/>
            <person name="Hornsby T."/>
            <person name="Howarth S."/>
            <person name="Huckle E.J."/>
            <person name="Hunt S."/>
            <person name="Jagels K."/>
            <person name="James K.D."/>
            <person name="Jones L."/>
            <person name="Jones M."/>
            <person name="Leather S."/>
            <person name="McDonald S."/>
            <person name="McLean J."/>
            <person name="Mooney P."/>
            <person name="Moule S."/>
            <person name="Mungall K.L."/>
            <person name="Murphy L.D."/>
            <person name="Niblett D."/>
            <person name="Odell C."/>
            <person name="Oliver K."/>
            <person name="O'Neil S."/>
            <person name="Pearson D."/>
            <person name="Quail M.A."/>
            <person name="Rabbinowitsch E."/>
            <person name="Rutherford K.M."/>
            <person name="Rutter S."/>
            <person name="Saunders D."/>
            <person name="Seeger K."/>
            <person name="Sharp S."/>
            <person name="Skelton J."/>
            <person name="Simmonds M.N."/>
            <person name="Squares R."/>
            <person name="Squares S."/>
            <person name="Stevens K."/>
            <person name="Taylor K."/>
            <person name="Taylor R.G."/>
            <person name="Tivey A."/>
            <person name="Walsh S.V."/>
            <person name="Warren T."/>
            <person name="Whitehead S."/>
            <person name="Woodward J.R."/>
            <person name="Volckaert G."/>
            <person name="Aert R."/>
            <person name="Robben J."/>
            <person name="Grymonprez B."/>
            <person name="Weltjens I."/>
            <person name="Vanstreels E."/>
            <person name="Rieger M."/>
            <person name="Schaefer M."/>
            <person name="Mueller-Auer S."/>
            <person name="Gabel C."/>
            <person name="Fuchs M."/>
            <person name="Duesterhoeft A."/>
            <person name="Fritzc C."/>
            <person name="Holzer E."/>
            <person name="Moestl D."/>
            <person name="Hilbert H."/>
            <person name="Borzym K."/>
            <person name="Langer I."/>
            <person name="Beck A."/>
            <person name="Lehrach H."/>
            <person name="Reinhardt R."/>
            <person name="Pohl T.M."/>
            <person name="Eger P."/>
            <person name="Zimmermann W."/>
            <person name="Wedler H."/>
            <person name="Wambutt R."/>
            <person name="Purnelle B."/>
            <person name="Goffeau A."/>
            <person name="Cadieu E."/>
            <person name="Dreano S."/>
            <person name="Gloux S."/>
            <person name="Lelaure V."/>
            <person name="Mottier S."/>
            <person name="Galibert F."/>
            <person name="Aves S.J."/>
            <person name="Xiang Z."/>
            <person name="Hunt C."/>
            <person name="Moore K."/>
            <person name="Hurst S.M."/>
            <person name="Lucas M."/>
            <person name="Rochet M."/>
            <person name="Gaillardin C."/>
            <person name="Tallada V.A."/>
            <person name="Garzon A."/>
            <person name="Thode G."/>
            <person name="Daga R.R."/>
            <person name="Cruzado L."/>
            <person name="Jimenez J."/>
            <person name="Sanchez M."/>
            <person name="del Rey F."/>
            <person name="Benito J."/>
            <person name="Dominguez A."/>
            <person name="Revuelta J.L."/>
            <person name="Moreno S."/>
            <person name="Armstrong J."/>
            <person name="Forsburg S.L."/>
            <person name="Cerutti L."/>
            <person name="Lowe T."/>
            <person name="McCombie W.R."/>
            <person name="Paulsen I."/>
            <person name="Potashkin J."/>
            <person name="Shpakovski G.V."/>
            <person name="Ussery D."/>
            <person name="Barrell B.G."/>
            <person name="Nurse P."/>
        </authorList>
    </citation>
    <scope>NUCLEOTIDE SEQUENCE [LARGE SCALE GENOMIC DNA]</scope>
    <source>
        <strain>972 / ATCC 24843</strain>
    </source>
</reference>
<name>YEAF_SCHPO</name>
<protein>
    <recommendedName>
        <fullName>Uncharacterized protein UNK4,15</fullName>
    </recommendedName>
</protein>
<accession>O14080</accession>